<feature type="chain" id="PRO_0000140298" description="Peptide methionine sulfoxide reductase MsrB">
    <location>
        <begin position="1"/>
        <end position="142"/>
    </location>
</feature>
<feature type="domain" description="MsrB" evidence="2">
    <location>
        <begin position="2"/>
        <end position="125"/>
    </location>
</feature>
<feature type="active site" description="Nucleophile" evidence="2">
    <location>
        <position position="114"/>
    </location>
</feature>
<organism>
    <name type="scientific">Staphylococcus aureus (strain MSSA476)</name>
    <dbReference type="NCBI Taxonomy" id="282459"/>
    <lineage>
        <taxon>Bacteria</taxon>
        <taxon>Bacillati</taxon>
        <taxon>Bacillota</taxon>
        <taxon>Bacilli</taxon>
        <taxon>Bacillales</taxon>
        <taxon>Staphylococcaceae</taxon>
        <taxon>Staphylococcus</taxon>
    </lineage>
</organism>
<protein>
    <recommendedName>
        <fullName evidence="1">Peptide methionine sulfoxide reductase MsrB</fullName>
        <ecNumber evidence="1">1.8.4.12</ecNumber>
    </recommendedName>
    <alternativeName>
        <fullName evidence="1">Peptide-methionine (R)-S-oxide reductase</fullName>
    </alternativeName>
</protein>
<gene>
    <name evidence="1" type="primary">msrB</name>
    <name type="ordered locus">SAS1366</name>
</gene>
<accession>Q6G9D8</accession>
<sequence>MLKKDKSELTDIEYIVTQENGTEPPFMNEYWNHFAKGIYVDKISGKPLFTSEEKFHSECGWPSFSKALDDDEIIELVDKSFGMLRTEVRSEESNSHLGHVFNDGPKESGGLRYCINSAAIQFIPYEKLEELGYGDLISHFDK</sequence>
<comment type="catalytic activity">
    <reaction evidence="1">
        <text>L-methionyl-[protein] + [thioredoxin]-disulfide + H2O = L-methionyl-(R)-S-oxide-[protein] + [thioredoxin]-dithiol</text>
        <dbReference type="Rhea" id="RHEA:24164"/>
        <dbReference type="Rhea" id="RHEA-COMP:10698"/>
        <dbReference type="Rhea" id="RHEA-COMP:10700"/>
        <dbReference type="Rhea" id="RHEA-COMP:12313"/>
        <dbReference type="Rhea" id="RHEA-COMP:12314"/>
        <dbReference type="ChEBI" id="CHEBI:15377"/>
        <dbReference type="ChEBI" id="CHEBI:16044"/>
        <dbReference type="ChEBI" id="CHEBI:29950"/>
        <dbReference type="ChEBI" id="CHEBI:45764"/>
        <dbReference type="ChEBI" id="CHEBI:50058"/>
        <dbReference type="EC" id="1.8.4.12"/>
    </reaction>
</comment>
<comment type="similarity">
    <text evidence="1">Belongs to the MsrB Met sulfoxide reductase family.</text>
</comment>
<reference key="1">
    <citation type="journal article" date="2004" name="Proc. Natl. Acad. Sci. U.S.A.">
        <title>Complete genomes of two clinical Staphylococcus aureus strains: evidence for the rapid evolution of virulence and drug resistance.</title>
        <authorList>
            <person name="Holden M.T.G."/>
            <person name="Feil E.J."/>
            <person name="Lindsay J.A."/>
            <person name="Peacock S.J."/>
            <person name="Day N.P.J."/>
            <person name="Enright M.C."/>
            <person name="Foster T.J."/>
            <person name="Moore C.E."/>
            <person name="Hurst L."/>
            <person name="Atkin R."/>
            <person name="Barron A."/>
            <person name="Bason N."/>
            <person name="Bentley S.D."/>
            <person name="Chillingworth C."/>
            <person name="Chillingworth T."/>
            <person name="Churcher C."/>
            <person name="Clark L."/>
            <person name="Corton C."/>
            <person name="Cronin A."/>
            <person name="Doggett J."/>
            <person name="Dowd L."/>
            <person name="Feltwell T."/>
            <person name="Hance Z."/>
            <person name="Harris B."/>
            <person name="Hauser H."/>
            <person name="Holroyd S."/>
            <person name="Jagels K."/>
            <person name="James K.D."/>
            <person name="Lennard N."/>
            <person name="Line A."/>
            <person name="Mayes R."/>
            <person name="Moule S."/>
            <person name="Mungall K."/>
            <person name="Ormond D."/>
            <person name="Quail M.A."/>
            <person name="Rabbinowitsch E."/>
            <person name="Rutherford K.M."/>
            <person name="Sanders M."/>
            <person name="Sharp S."/>
            <person name="Simmonds M."/>
            <person name="Stevens K."/>
            <person name="Whitehead S."/>
            <person name="Barrell B.G."/>
            <person name="Spratt B.G."/>
            <person name="Parkhill J."/>
        </authorList>
    </citation>
    <scope>NUCLEOTIDE SEQUENCE [LARGE SCALE GENOMIC DNA]</scope>
    <source>
        <strain>MSSA476</strain>
    </source>
</reference>
<name>MSRB_STAAS</name>
<proteinExistence type="inferred from homology"/>
<dbReference type="EC" id="1.8.4.12" evidence="1"/>
<dbReference type="EMBL" id="BX571857">
    <property type="protein sequence ID" value="CAG43142.1"/>
    <property type="molecule type" value="Genomic_DNA"/>
</dbReference>
<dbReference type="RefSeq" id="WP_000913315.1">
    <property type="nucleotide sequence ID" value="NC_002953.3"/>
</dbReference>
<dbReference type="SMR" id="Q6G9D8"/>
<dbReference type="KEGG" id="sas:SAS1366"/>
<dbReference type="HOGENOM" id="CLU_031040_8_5_9"/>
<dbReference type="GO" id="GO:0005737">
    <property type="term" value="C:cytoplasm"/>
    <property type="evidence" value="ECO:0007669"/>
    <property type="project" value="TreeGrafter"/>
</dbReference>
<dbReference type="GO" id="GO:0033743">
    <property type="term" value="F:peptide-methionine (R)-S-oxide reductase activity"/>
    <property type="evidence" value="ECO:0007669"/>
    <property type="project" value="UniProtKB-UniRule"/>
</dbReference>
<dbReference type="GO" id="GO:0030091">
    <property type="term" value="P:protein repair"/>
    <property type="evidence" value="ECO:0007669"/>
    <property type="project" value="InterPro"/>
</dbReference>
<dbReference type="GO" id="GO:0006979">
    <property type="term" value="P:response to oxidative stress"/>
    <property type="evidence" value="ECO:0007669"/>
    <property type="project" value="InterPro"/>
</dbReference>
<dbReference type="FunFam" id="2.170.150.20:FF:000003">
    <property type="entry name" value="Peptide methionine sulfoxide reductase MsrB"/>
    <property type="match status" value="1"/>
</dbReference>
<dbReference type="Gene3D" id="2.170.150.20">
    <property type="entry name" value="Peptide methionine sulfoxide reductase"/>
    <property type="match status" value="1"/>
</dbReference>
<dbReference type="HAMAP" id="MF_01400">
    <property type="entry name" value="MsrB"/>
    <property type="match status" value="1"/>
</dbReference>
<dbReference type="InterPro" id="IPR028427">
    <property type="entry name" value="Met_Sox_Rdtase_MsrB"/>
</dbReference>
<dbReference type="InterPro" id="IPR002579">
    <property type="entry name" value="Met_Sox_Rdtase_MsrB_dom"/>
</dbReference>
<dbReference type="InterPro" id="IPR011057">
    <property type="entry name" value="Mss4-like_sf"/>
</dbReference>
<dbReference type="NCBIfam" id="TIGR00357">
    <property type="entry name" value="peptide-methionine (R)-S-oxide reductase MsrB"/>
    <property type="match status" value="1"/>
</dbReference>
<dbReference type="PANTHER" id="PTHR10173">
    <property type="entry name" value="METHIONINE SULFOXIDE REDUCTASE"/>
    <property type="match status" value="1"/>
</dbReference>
<dbReference type="PANTHER" id="PTHR10173:SF59">
    <property type="entry name" value="PEPTIDE METHIONINE SULFOXIDE REDUCTASE MSRA_MSRB"/>
    <property type="match status" value="1"/>
</dbReference>
<dbReference type="Pfam" id="PF01641">
    <property type="entry name" value="SelR"/>
    <property type="match status" value="1"/>
</dbReference>
<dbReference type="SUPFAM" id="SSF51316">
    <property type="entry name" value="Mss4-like"/>
    <property type="match status" value="1"/>
</dbReference>
<dbReference type="PROSITE" id="PS51790">
    <property type="entry name" value="MSRB"/>
    <property type="match status" value="1"/>
</dbReference>
<evidence type="ECO:0000255" key="1">
    <source>
        <dbReference type="HAMAP-Rule" id="MF_01400"/>
    </source>
</evidence>
<evidence type="ECO:0000255" key="2">
    <source>
        <dbReference type="PROSITE-ProRule" id="PRU01126"/>
    </source>
</evidence>
<keyword id="KW-0560">Oxidoreductase</keyword>